<feature type="chain" id="PRO_1000046276" description="Large ribosomal subunit protein uL11">
    <location>
        <begin position="1"/>
        <end position="141"/>
    </location>
</feature>
<keyword id="KW-0488">Methylation</keyword>
<keyword id="KW-0687">Ribonucleoprotein</keyword>
<keyword id="KW-0689">Ribosomal protein</keyword>
<keyword id="KW-0694">RNA-binding</keyword>
<keyword id="KW-0699">rRNA-binding</keyword>
<comment type="function">
    <text evidence="1">Forms part of the ribosomal stalk which helps the ribosome interact with GTP-bound translation factors.</text>
</comment>
<comment type="subunit">
    <text evidence="1">Part of the ribosomal stalk of the 50S ribosomal subunit. Interacts with L10 and the large rRNA to form the base of the stalk. L10 forms an elongated spine to which L12 dimers bind in a sequential fashion forming a multimeric L10(L12)X complex.</text>
</comment>
<comment type="PTM">
    <text evidence="1">One or more lysine residues are methylated.</text>
</comment>
<comment type="similarity">
    <text evidence="1">Belongs to the universal ribosomal protein uL11 family.</text>
</comment>
<proteinExistence type="inferred from homology"/>
<sequence>MAKKVEKLVKLQIPAGKATPAPPVGPALGQAGINIMGFTKEFNARTADQAGMIIPVVISVYEDKSFTFITKTPPAAVLLKKAAGVEKGSGTPNKTKVATVTRAQVQEIAETKMPDLNAASLEAAMRMIEGTARSMGFTVTD</sequence>
<reference key="1">
    <citation type="journal article" date="2007" name="PLoS ONE">
        <title>A glimpse of streptococcal toxic shock syndrome from comparative genomics of S. suis 2 Chinese isolates.</title>
        <authorList>
            <person name="Chen C."/>
            <person name="Tang J."/>
            <person name="Dong W."/>
            <person name="Wang C."/>
            <person name="Feng Y."/>
            <person name="Wang J."/>
            <person name="Zheng F."/>
            <person name="Pan X."/>
            <person name="Liu D."/>
            <person name="Li M."/>
            <person name="Song Y."/>
            <person name="Zhu X."/>
            <person name="Sun H."/>
            <person name="Feng T."/>
            <person name="Guo Z."/>
            <person name="Ju A."/>
            <person name="Ge J."/>
            <person name="Dong Y."/>
            <person name="Sun W."/>
            <person name="Jiang Y."/>
            <person name="Wang J."/>
            <person name="Yan J."/>
            <person name="Yang H."/>
            <person name="Wang X."/>
            <person name="Gao G.F."/>
            <person name="Yang R."/>
            <person name="Wang J."/>
            <person name="Yu J."/>
        </authorList>
    </citation>
    <scope>NUCLEOTIDE SEQUENCE [LARGE SCALE GENOMIC DNA]</scope>
    <source>
        <strain>98HAH33</strain>
    </source>
</reference>
<name>RL11_STRS2</name>
<gene>
    <name evidence="1" type="primary">rplK</name>
    <name type="ordered locus">SSU98_1348</name>
</gene>
<organism>
    <name type="scientific">Streptococcus suis (strain 98HAH33)</name>
    <dbReference type="NCBI Taxonomy" id="391296"/>
    <lineage>
        <taxon>Bacteria</taxon>
        <taxon>Bacillati</taxon>
        <taxon>Bacillota</taxon>
        <taxon>Bacilli</taxon>
        <taxon>Lactobacillales</taxon>
        <taxon>Streptococcaceae</taxon>
        <taxon>Streptococcus</taxon>
    </lineage>
</organism>
<evidence type="ECO:0000255" key="1">
    <source>
        <dbReference type="HAMAP-Rule" id="MF_00736"/>
    </source>
</evidence>
<evidence type="ECO:0000305" key="2"/>
<protein>
    <recommendedName>
        <fullName evidence="1">Large ribosomal subunit protein uL11</fullName>
    </recommendedName>
    <alternativeName>
        <fullName evidence="2">50S ribosomal protein L11</fullName>
    </alternativeName>
</protein>
<dbReference type="EMBL" id="CP000408">
    <property type="protein sequence ID" value="ABP92506.1"/>
    <property type="molecule type" value="Genomic_DNA"/>
</dbReference>
<dbReference type="SMR" id="A4W2B7"/>
<dbReference type="KEGG" id="ssv:SSU98_1348"/>
<dbReference type="HOGENOM" id="CLU_074237_2_1_9"/>
<dbReference type="GO" id="GO:0022625">
    <property type="term" value="C:cytosolic large ribosomal subunit"/>
    <property type="evidence" value="ECO:0007669"/>
    <property type="project" value="TreeGrafter"/>
</dbReference>
<dbReference type="GO" id="GO:0070180">
    <property type="term" value="F:large ribosomal subunit rRNA binding"/>
    <property type="evidence" value="ECO:0007669"/>
    <property type="project" value="UniProtKB-UniRule"/>
</dbReference>
<dbReference type="GO" id="GO:0003735">
    <property type="term" value="F:structural constituent of ribosome"/>
    <property type="evidence" value="ECO:0007669"/>
    <property type="project" value="InterPro"/>
</dbReference>
<dbReference type="GO" id="GO:0006412">
    <property type="term" value="P:translation"/>
    <property type="evidence" value="ECO:0007669"/>
    <property type="project" value="UniProtKB-UniRule"/>
</dbReference>
<dbReference type="CDD" id="cd00349">
    <property type="entry name" value="Ribosomal_L11"/>
    <property type="match status" value="1"/>
</dbReference>
<dbReference type="FunFam" id="1.10.10.250:FF:000001">
    <property type="entry name" value="50S ribosomal protein L11"/>
    <property type="match status" value="1"/>
</dbReference>
<dbReference type="FunFam" id="3.30.1550.10:FF:000001">
    <property type="entry name" value="50S ribosomal protein L11"/>
    <property type="match status" value="1"/>
</dbReference>
<dbReference type="Gene3D" id="1.10.10.250">
    <property type="entry name" value="Ribosomal protein L11, C-terminal domain"/>
    <property type="match status" value="1"/>
</dbReference>
<dbReference type="Gene3D" id="3.30.1550.10">
    <property type="entry name" value="Ribosomal protein L11/L12, N-terminal domain"/>
    <property type="match status" value="1"/>
</dbReference>
<dbReference type="HAMAP" id="MF_00736">
    <property type="entry name" value="Ribosomal_uL11"/>
    <property type="match status" value="1"/>
</dbReference>
<dbReference type="InterPro" id="IPR000911">
    <property type="entry name" value="Ribosomal_uL11"/>
</dbReference>
<dbReference type="InterPro" id="IPR006519">
    <property type="entry name" value="Ribosomal_uL11_bac-typ"/>
</dbReference>
<dbReference type="InterPro" id="IPR020783">
    <property type="entry name" value="Ribosomal_uL11_C"/>
</dbReference>
<dbReference type="InterPro" id="IPR036769">
    <property type="entry name" value="Ribosomal_uL11_C_sf"/>
</dbReference>
<dbReference type="InterPro" id="IPR020785">
    <property type="entry name" value="Ribosomal_uL11_CS"/>
</dbReference>
<dbReference type="InterPro" id="IPR020784">
    <property type="entry name" value="Ribosomal_uL11_N"/>
</dbReference>
<dbReference type="InterPro" id="IPR036796">
    <property type="entry name" value="Ribosomal_uL11_N_sf"/>
</dbReference>
<dbReference type="NCBIfam" id="TIGR01632">
    <property type="entry name" value="L11_bact"/>
    <property type="match status" value="1"/>
</dbReference>
<dbReference type="PANTHER" id="PTHR11661">
    <property type="entry name" value="60S RIBOSOMAL PROTEIN L12"/>
    <property type="match status" value="1"/>
</dbReference>
<dbReference type="PANTHER" id="PTHR11661:SF1">
    <property type="entry name" value="LARGE RIBOSOMAL SUBUNIT PROTEIN UL11M"/>
    <property type="match status" value="1"/>
</dbReference>
<dbReference type="Pfam" id="PF00298">
    <property type="entry name" value="Ribosomal_L11"/>
    <property type="match status" value="1"/>
</dbReference>
<dbReference type="Pfam" id="PF03946">
    <property type="entry name" value="Ribosomal_L11_N"/>
    <property type="match status" value="1"/>
</dbReference>
<dbReference type="SMART" id="SM00649">
    <property type="entry name" value="RL11"/>
    <property type="match status" value="1"/>
</dbReference>
<dbReference type="SUPFAM" id="SSF54747">
    <property type="entry name" value="Ribosomal L11/L12e N-terminal domain"/>
    <property type="match status" value="1"/>
</dbReference>
<dbReference type="SUPFAM" id="SSF46906">
    <property type="entry name" value="Ribosomal protein L11, C-terminal domain"/>
    <property type="match status" value="1"/>
</dbReference>
<dbReference type="PROSITE" id="PS00359">
    <property type="entry name" value="RIBOSOMAL_L11"/>
    <property type="match status" value="1"/>
</dbReference>
<accession>A4W2B7</accession>